<organism>
    <name type="scientific">Shigella flexneri</name>
    <dbReference type="NCBI Taxonomy" id="623"/>
    <lineage>
        <taxon>Bacteria</taxon>
        <taxon>Pseudomonadati</taxon>
        <taxon>Pseudomonadota</taxon>
        <taxon>Gammaproteobacteria</taxon>
        <taxon>Enterobacterales</taxon>
        <taxon>Enterobacteriaceae</taxon>
        <taxon>Shigella</taxon>
    </lineage>
</organism>
<proteinExistence type="inferred from homology"/>
<accession>P0AD58</accession>
<accession>P19641</accession>
<evidence type="ECO:0000250" key="1"/>
<evidence type="ECO:0000250" key="2">
    <source>
        <dbReference type="UniProtKB" id="P14324"/>
    </source>
</evidence>
<evidence type="ECO:0000250" key="3">
    <source>
        <dbReference type="UniProtKB" id="Q12051"/>
    </source>
</evidence>
<evidence type="ECO:0000305" key="4"/>
<comment type="function">
    <text evidence="1">Supplies octaprenyl diphosphate, the precursor for the side chain of the isoprenoid quinones ubiquinone and menaquinone.</text>
</comment>
<comment type="catalytic activity">
    <reaction>
        <text>5 isopentenyl diphosphate + (2E,6E)-farnesyl diphosphate = all-trans-octaprenyl diphosphate + 5 diphosphate</text>
        <dbReference type="Rhea" id="RHEA:27798"/>
        <dbReference type="ChEBI" id="CHEBI:33019"/>
        <dbReference type="ChEBI" id="CHEBI:57711"/>
        <dbReference type="ChEBI" id="CHEBI:128769"/>
        <dbReference type="ChEBI" id="CHEBI:175763"/>
        <dbReference type="EC" id="2.5.1.90"/>
    </reaction>
</comment>
<comment type="cofactor">
    <cofactor evidence="1">
        <name>Mg(2+)</name>
        <dbReference type="ChEBI" id="CHEBI:18420"/>
    </cofactor>
    <text evidence="1">Binds 2 Mg(2+) ions per subunit.</text>
</comment>
<comment type="similarity">
    <text evidence="4">Belongs to the FPP/GGPP synthase family.</text>
</comment>
<keyword id="KW-0414">Isoprene biosynthesis</keyword>
<keyword id="KW-0460">Magnesium</keyword>
<keyword id="KW-0479">Metal-binding</keyword>
<keyword id="KW-1185">Reference proteome</keyword>
<keyword id="KW-0808">Transferase</keyword>
<reference key="1">
    <citation type="journal article" date="2002" name="Nucleic Acids Res.">
        <title>Genome sequence of Shigella flexneri 2a: insights into pathogenicity through comparison with genomes of Escherichia coli K12 and O157.</title>
        <authorList>
            <person name="Jin Q."/>
            <person name="Yuan Z."/>
            <person name="Xu J."/>
            <person name="Wang Y."/>
            <person name="Shen Y."/>
            <person name="Lu W."/>
            <person name="Wang J."/>
            <person name="Liu H."/>
            <person name="Yang J."/>
            <person name="Yang F."/>
            <person name="Zhang X."/>
            <person name="Zhang J."/>
            <person name="Yang G."/>
            <person name="Wu H."/>
            <person name="Qu D."/>
            <person name="Dong J."/>
            <person name="Sun L."/>
            <person name="Xue Y."/>
            <person name="Zhao A."/>
            <person name="Gao Y."/>
            <person name="Zhu J."/>
            <person name="Kan B."/>
            <person name="Ding K."/>
            <person name="Chen S."/>
            <person name="Cheng H."/>
            <person name="Yao Z."/>
            <person name="He B."/>
            <person name="Chen R."/>
            <person name="Ma D."/>
            <person name="Qiang B."/>
            <person name="Wen Y."/>
            <person name="Hou Y."/>
            <person name="Yu J."/>
        </authorList>
    </citation>
    <scope>NUCLEOTIDE SEQUENCE [LARGE SCALE GENOMIC DNA]</scope>
    <source>
        <strain>301 / Serotype 2a</strain>
    </source>
</reference>
<reference key="2">
    <citation type="journal article" date="2003" name="Infect. Immun.">
        <title>Complete genome sequence and comparative genomics of Shigella flexneri serotype 2a strain 2457T.</title>
        <authorList>
            <person name="Wei J."/>
            <person name="Goldberg M.B."/>
            <person name="Burland V."/>
            <person name="Venkatesan M.M."/>
            <person name="Deng W."/>
            <person name="Fournier G."/>
            <person name="Mayhew G.F."/>
            <person name="Plunkett G. III"/>
            <person name="Rose D.J."/>
            <person name="Darling A."/>
            <person name="Mau B."/>
            <person name="Perna N.T."/>
            <person name="Payne S.M."/>
            <person name="Runyen-Janecky L.J."/>
            <person name="Zhou S."/>
            <person name="Schwartz D.C."/>
            <person name="Blattner F.R."/>
        </authorList>
    </citation>
    <scope>NUCLEOTIDE SEQUENCE [LARGE SCALE GENOMIC DNA]</scope>
    <source>
        <strain>ATCC 700930 / 2457T / Serotype 2a</strain>
    </source>
</reference>
<sequence length="323" mass="35217">MNLEKINELTAQDMAGVNAAILEQLNSDVQLINQLGYYIVSGGGKRIRPMIAVLAARAVGYEGNAHVTIAALIEFIHTATLLHDDVVDESDMRRGKATANAAFGNAASVLVGDFIYTRAFQMMTSLGSLKVLEVMSEAVNVIAEGEVLQLMNVNDPDITEENYMRVIYSKTARLFEAAAQCSGILAGCTPEEEKGLQDYGRYLGTAFQLIDDLLDYNADGEQLGKNVGDDLNEGKPTLPLLHAMHHGTPEQAQMIRTAIEQGNGRHLLEPVLEAMNACGSLEWTRQRAEEEADKAIAALQVLPDTPWREALIGLAHIAVQRDR</sequence>
<protein>
    <recommendedName>
        <fullName>Octaprenyl diphosphate synthase</fullName>
        <ecNumber>2.5.1.90</ecNumber>
    </recommendedName>
    <alternativeName>
        <fullName>All-trans-octaprenyl-diphosphate synthase</fullName>
    </alternativeName>
    <alternativeName>
        <fullName>Octaprenyl pyrophosphate synthase</fullName>
        <shortName>OPP synthase</shortName>
    </alternativeName>
</protein>
<gene>
    <name type="primary">ispB</name>
    <name type="ordered locus">SF3227</name>
    <name type="ordered locus">S3445</name>
</gene>
<name>ISPB_SHIFL</name>
<feature type="chain" id="PRO_0000124007" description="Octaprenyl diphosphate synthase">
    <location>
        <begin position="1"/>
        <end position="323"/>
    </location>
</feature>
<feature type="binding site" evidence="2">
    <location>
        <position position="45"/>
    </location>
    <ligand>
        <name>isopentenyl diphosphate</name>
        <dbReference type="ChEBI" id="CHEBI:128769"/>
    </ligand>
</feature>
<feature type="binding site" evidence="2">
    <location>
        <position position="48"/>
    </location>
    <ligand>
        <name>isopentenyl diphosphate</name>
        <dbReference type="ChEBI" id="CHEBI:128769"/>
    </ligand>
</feature>
<feature type="binding site" evidence="3">
    <location>
        <position position="77"/>
    </location>
    <ligand>
        <name>isopentenyl diphosphate</name>
        <dbReference type="ChEBI" id="CHEBI:128769"/>
    </ligand>
</feature>
<feature type="binding site" evidence="2">
    <location>
        <position position="84"/>
    </location>
    <ligand>
        <name>Mg(2+)</name>
        <dbReference type="ChEBI" id="CHEBI:18420"/>
        <label>1</label>
    </ligand>
</feature>
<feature type="binding site" evidence="2">
    <location>
        <position position="84"/>
    </location>
    <ligand>
        <name>Mg(2+)</name>
        <dbReference type="ChEBI" id="CHEBI:18420"/>
        <label>2</label>
    </ligand>
</feature>
<feature type="binding site" evidence="2">
    <location>
        <position position="88"/>
    </location>
    <ligand>
        <name>Mg(2+)</name>
        <dbReference type="ChEBI" id="CHEBI:18420"/>
        <label>1</label>
    </ligand>
</feature>
<feature type="binding site" evidence="2">
    <location>
        <position position="88"/>
    </location>
    <ligand>
        <name>Mg(2+)</name>
        <dbReference type="ChEBI" id="CHEBI:18420"/>
        <label>2</label>
    </ligand>
</feature>
<feature type="binding site" evidence="1">
    <location>
        <position position="93"/>
    </location>
    <ligand>
        <name>an all-trans-polyprenyl diphosphate</name>
        <dbReference type="ChEBI" id="CHEBI:58914"/>
    </ligand>
</feature>
<feature type="binding site" evidence="2">
    <location>
        <position position="94"/>
    </location>
    <ligand>
        <name>isopentenyl diphosphate</name>
        <dbReference type="ChEBI" id="CHEBI:128769"/>
    </ligand>
</feature>
<feature type="binding site" evidence="1">
    <location>
        <position position="170"/>
    </location>
    <ligand>
        <name>an all-trans-polyprenyl diphosphate</name>
        <dbReference type="ChEBI" id="CHEBI:58914"/>
    </ligand>
</feature>
<feature type="binding site" evidence="1">
    <location>
        <position position="171"/>
    </location>
    <ligand>
        <name>an all-trans-polyprenyl diphosphate</name>
        <dbReference type="ChEBI" id="CHEBI:58914"/>
    </ligand>
</feature>
<feature type="binding site" evidence="1">
    <location>
        <position position="208"/>
    </location>
    <ligand>
        <name>an all-trans-polyprenyl diphosphate</name>
        <dbReference type="ChEBI" id="CHEBI:58914"/>
    </ligand>
</feature>
<dbReference type="EC" id="2.5.1.90"/>
<dbReference type="EMBL" id="AE005674">
    <property type="protein sequence ID" value="AAN44693.1"/>
    <property type="molecule type" value="Genomic_DNA"/>
</dbReference>
<dbReference type="EMBL" id="AE014073">
    <property type="protein sequence ID" value="AAP18507.1"/>
    <property type="molecule type" value="Genomic_DNA"/>
</dbReference>
<dbReference type="RefSeq" id="NP_708986.1">
    <property type="nucleotide sequence ID" value="NC_004337.2"/>
</dbReference>
<dbReference type="RefSeq" id="WP_001047336.1">
    <property type="nucleotide sequence ID" value="NZ_WPGW01000004.1"/>
</dbReference>
<dbReference type="SMR" id="P0AD58"/>
<dbReference type="STRING" id="198214.SF3227"/>
<dbReference type="PaxDb" id="198214-SF3227"/>
<dbReference type="GeneID" id="1024423"/>
<dbReference type="GeneID" id="93778794"/>
<dbReference type="KEGG" id="sfl:SF3227"/>
<dbReference type="KEGG" id="sfx:S3445"/>
<dbReference type="PATRIC" id="fig|198214.7.peg.3828"/>
<dbReference type="HOGENOM" id="CLU_014015_2_0_6"/>
<dbReference type="Proteomes" id="UP000001006">
    <property type="component" value="Chromosome"/>
</dbReference>
<dbReference type="Proteomes" id="UP000002673">
    <property type="component" value="Chromosome"/>
</dbReference>
<dbReference type="GO" id="GO:0106350">
    <property type="term" value="F:all-trans-octaprenyl-diphosphate synthase activity"/>
    <property type="evidence" value="ECO:0007669"/>
    <property type="project" value="UniProtKB-EC"/>
</dbReference>
<dbReference type="GO" id="GO:0046872">
    <property type="term" value="F:metal ion binding"/>
    <property type="evidence" value="ECO:0007669"/>
    <property type="project" value="UniProtKB-KW"/>
</dbReference>
<dbReference type="GO" id="GO:0008299">
    <property type="term" value="P:isoprenoid biosynthetic process"/>
    <property type="evidence" value="ECO:0007669"/>
    <property type="project" value="UniProtKB-KW"/>
</dbReference>
<dbReference type="CDD" id="cd00685">
    <property type="entry name" value="Trans_IPPS_HT"/>
    <property type="match status" value="1"/>
</dbReference>
<dbReference type="FunFam" id="1.10.600.10:FF:000002">
    <property type="entry name" value="Octaprenyl diphosphate synthase"/>
    <property type="match status" value="1"/>
</dbReference>
<dbReference type="Gene3D" id="1.10.600.10">
    <property type="entry name" value="Farnesyl Diphosphate Synthase"/>
    <property type="match status" value="1"/>
</dbReference>
<dbReference type="InterPro" id="IPR008949">
    <property type="entry name" value="Isoprenoid_synthase_dom_sf"/>
</dbReference>
<dbReference type="InterPro" id="IPR000092">
    <property type="entry name" value="Polyprenyl_synt"/>
</dbReference>
<dbReference type="InterPro" id="IPR033749">
    <property type="entry name" value="Polyprenyl_synt_CS"/>
</dbReference>
<dbReference type="NCBIfam" id="NF008140">
    <property type="entry name" value="PRK10888.1"/>
    <property type="match status" value="1"/>
</dbReference>
<dbReference type="PANTHER" id="PTHR12001:SF69">
    <property type="entry name" value="ALL TRANS-POLYPRENYL-DIPHOSPHATE SYNTHASE PDSS1"/>
    <property type="match status" value="1"/>
</dbReference>
<dbReference type="PANTHER" id="PTHR12001">
    <property type="entry name" value="GERANYLGERANYL PYROPHOSPHATE SYNTHASE"/>
    <property type="match status" value="1"/>
</dbReference>
<dbReference type="Pfam" id="PF00348">
    <property type="entry name" value="polyprenyl_synt"/>
    <property type="match status" value="1"/>
</dbReference>
<dbReference type="SFLD" id="SFLDS00005">
    <property type="entry name" value="Isoprenoid_Synthase_Type_I"/>
    <property type="match status" value="1"/>
</dbReference>
<dbReference type="SUPFAM" id="SSF48576">
    <property type="entry name" value="Terpenoid synthases"/>
    <property type="match status" value="1"/>
</dbReference>
<dbReference type="PROSITE" id="PS00723">
    <property type="entry name" value="POLYPRENYL_SYNTHASE_1"/>
    <property type="match status" value="1"/>
</dbReference>
<dbReference type="PROSITE" id="PS00444">
    <property type="entry name" value="POLYPRENYL_SYNTHASE_2"/>
    <property type="match status" value="1"/>
</dbReference>